<evidence type="ECO:0000255" key="1"/>
<evidence type="ECO:0000303" key="2">
    <source>
    </source>
</evidence>
<evidence type="ECO:0000303" key="3">
    <source>
    </source>
</evidence>
<evidence type="ECO:0000305" key="4"/>
<evidence type="ECO:0007744" key="5">
    <source>
    </source>
</evidence>
<dbReference type="EMBL" id="AK312433">
    <property type="protein sequence ID" value="BAG35342.1"/>
    <property type="molecule type" value="mRNA"/>
</dbReference>
<dbReference type="EMBL" id="BX640883">
    <property type="protein sequence ID" value="CAE45938.1"/>
    <property type="molecule type" value="mRNA"/>
</dbReference>
<dbReference type="EMBL" id="AL031431">
    <property type="status" value="NOT_ANNOTATED_CDS"/>
    <property type="molecule type" value="Genomic_DNA"/>
</dbReference>
<dbReference type="EMBL" id="CH471134">
    <property type="protein sequence ID" value="EAW95130.1"/>
    <property type="molecule type" value="Genomic_DNA"/>
</dbReference>
<dbReference type="EMBL" id="BC001265">
    <property type="protein sequence ID" value="AAH01265.1"/>
    <property type="molecule type" value="mRNA"/>
</dbReference>
<dbReference type="EMBL" id="BC063583">
    <property type="protein sequence ID" value="AAH63583.1"/>
    <property type="molecule type" value="mRNA"/>
</dbReference>
<dbReference type="CCDS" id="CCDS30631.1">
    <molecule id="Q6P499-1"/>
</dbReference>
<dbReference type="CCDS" id="CCDS81280.1">
    <molecule id="Q6P499-3"/>
</dbReference>
<dbReference type="CCDS" id="CCDS81282.1">
    <molecule id="Q6P499-2"/>
</dbReference>
<dbReference type="RefSeq" id="NP_001309783.1">
    <molecule id="Q6P499-1"/>
    <property type="nucleotide sequence ID" value="NM_001322854.2"/>
</dbReference>
<dbReference type="RefSeq" id="NP_001309784.1">
    <molecule id="Q6P499-1"/>
    <property type="nucleotide sequence ID" value="NM_001322855.2"/>
</dbReference>
<dbReference type="RefSeq" id="NP_001309785.1">
    <molecule id="Q6P499-1"/>
    <property type="nucleotide sequence ID" value="NM_001322856.2"/>
</dbReference>
<dbReference type="RefSeq" id="NP_001309786.1">
    <molecule id="Q6P499-1"/>
    <property type="nucleotide sequence ID" value="NM_001322857.1"/>
</dbReference>
<dbReference type="RefSeq" id="NP_001309791.1">
    <molecule id="Q6P499-2"/>
    <property type="nucleotide sequence ID" value="NM_001322862.2"/>
</dbReference>
<dbReference type="RefSeq" id="NP_001309792.1">
    <molecule id="Q6P499-2"/>
    <property type="nucleotide sequence ID" value="NM_001322863.2"/>
</dbReference>
<dbReference type="RefSeq" id="NP_001309794.1">
    <molecule id="Q6P499-3"/>
    <property type="nucleotide sequence ID" value="NM_001322865.2"/>
</dbReference>
<dbReference type="RefSeq" id="NP_065181.1">
    <molecule id="Q6P499-1"/>
    <property type="nucleotide sequence ID" value="NM_020448.5"/>
</dbReference>
<dbReference type="BioGRID" id="121434">
    <property type="interactions" value="29"/>
</dbReference>
<dbReference type="FunCoup" id="Q6P499">
    <property type="interactions" value="136"/>
</dbReference>
<dbReference type="IntAct" id="Q6P499">
    <property type="interactions" value="11"/>
</dbReference>
<dbReference type="STRING" id="9606.ENSP00000363520"/>
<dbReference type="TCDB" id="2.A.7.25.3">
    <property type="family name" value="the drug/metabolite transporter (dmt) superfamily"/>
</dbReference>
<dbReference type="GlyCosmos" id="Q6P499">
    <property type="glycosylation" value="1 site, No reported glycans"/>
</dbReference>
<dbReference type="GlyGen" id="Q6P499">
    <property type="glycosylation" value="1 site"/>
</dbReference>
<dbReference type="iPTMnet" id="Q6P499"/>
<dbReference type="PhosphoSitePlus" id="Q6P499"/>
<dbReference type="BioMuta" id="NIPAL3"/>
<dbReference type="DMDM" id="74737314"/>
<dbReference type="jPOST" id="Q6P499"/>
<dbReference type="MassIVE" id="Q6P499"/>
<dbReference type="PaxDb" id="9606-ENSP00000363520"/>
<dbReference type="PeptideAtlas" id="Q6P499"/>
<dbReference type="ProteomicsDB" id="66952">
    <molecule id="Q6P499-1"/>
</dbReference>
<dbReference type="ProteomicsDB" id="66953">
    <molecule id="Q6P499-2"/>
</dbReference>
<dbReference type="ProteomicsDB" id="66954">
    <molecule id="Q6P499-3"/>
</dbReference>
<dbReference type="Antibodypedia" id="30307">
    <property type="antibodies" value="94 antibodies from 13 providers"/>
</dbReference>
<dbReference type="DNASU" id="57185"/>
<dbReference type="Ensembl" id="ENST00000003912.8">
    <molecule id="Q6P499-2"/>
    <property type="protein sequence ID" value="ENSP00000003912.3"/>
    <property type="gene ID" value="ENSG00000001461.18"/>
</dbReference>
<dbReference type="Ensembl" id="ENST00000358028.8">
    <molecule id="Q6P499-3"/>
    <property type="protein sequence ID" value="ENSP00000350722.4"/>
    <property type="gene ID" value="ENSG00000001461.18"/>
</dbReference>
<dbReference type="Ensembl" id="ENST00000374399.9">
    <molecule id="Q6P499-1"/>
    <property type="protein sequence ID" value="ENSP00000363520.4"/>
    <property type="gene ID" value="ENSG00000001461.18"/>
</dbReference>
<dbReference type="GeneID" id="57185"/>
<dbReference type="KEGG" id="hsa:57185"/>
<dbReference type="MANE-Select" id="ENST00000374399.9">
    <property type="protein sequence ID" value="ENSP00000363520.4"/>
    <property type="RefSeq nucleotide sequence ID" value="NM_020448.5"/>
    <property type="RefSeq protein sequence ID" value="NP_065181.1"/>
</dbReference>
<dbReference type="UCSC" id="uc001bjh.4">
    <molecule id="Q6P499-1"/>
    <property type="organism name" value="human"/>
</dbReference>
<dbReference type="AGR" id="HGNC:25233"/>
<dbReference type="CTD" id="57185"/>
<dbReference type="DisGeNET" id="57185"/>
<dbReference type="GeneCards" id="NIPAL3"/>
<dbReference type="HGNC" id="HGNC:25233">
    <property type="gene designation" value="NIPAL3"/>
</dbReference>
<dbReference type="HPA" id="ENSG00000001461">
    <property type="expression patterns" value="Tissue enhanced (brain)"/>
</dbReference>
<dbReference type="MIM" id="620034">
    <property type="type" value="gene"/>
</dbReference>
<dbReference type="neXtProt" id="NX_Q6P499"/>
<dbReference type="OpenTargets" id="ENSG00000001461"/>
<dbReference type="PharmGKB" id="PA164723927"/>
<dbReference type="VEuPathDB" id="HostDB:ENSG00000001461"/>
<dbReference type="eggNOG" id="KOG2922">
    <property type="taxonomic scope" value="Eukaryota"/>
</dbReference>
<dbReference type="GeneTree" id="ENSGT00940000158233"/>
<dbReference type="HOGENOM" id="CLU_012349_2_0_1"/>
<dbReference type="InParanoid" id="Q6P499"/>
<dbReference type="OMA" id="PYVTMDV"/>
<dbReference type="OrthoDB" id="165382at2759"/>
<dbReference type="PAN-GO" id="Q6P499">
    <property type="GO annotations" value="2 GO annotations based on evolutionary models"/>
</dbReference>
<dbReference type="PhylomeDB" id="Q6P499"/>
<dbReference type="TreeFam" id="TF313214"/>
<dbReference type="PathwayCommons" id="Q6P499"/>
<dbReference type="Reactome" id="R-HSA-5223345">
    <property type="pathway name" value="Miscellaneous transport and binding events"/>
</dbReference>
<dbReference type="SignaLink" id="Q6P499"/>
<dbReference type="BioGRID-ORCS" id="57185">
    <property type="hits" value="11 hits in 1153 CRISPR screens"/>
</dbReference>
<dbReference type="ChiTaRS" id="NIPAL3">
    <property type="organism name" value="human"/>
</dbReference>
<dbReference type="GenomeRNAi" id="57185"/>
<dbReference type="Pharos" id="Q6P499">
    <property type="development level" value="Tdark"/>
</dbReference>
<dbReference type="PRO" id="PR:Q6P499"/>
<dbReference type="Proteomes" id="UP000005640">
    <property type="component" value="Chromosome 1"/>
</dbReference>
<dbReference type="RNAct" id="Q6P499">
    <property type="molecule type" value="protein"/>
</dbReference>
<dbReference type="Bgee" id="ENSG00000001461">
    <property type="expression patterns" value="Expressed in inferior vagus X ganglion and 199 other cell types or tissues"/>
</dbReference>
<dbReference type="ExpressionAtlas" id="Q6P499">
    <property type="expression patterns" value="baseline and differential"/>
</dbReference>
<dbReference type="GO" id="GO:0016020">
    <property type="term" value="C:membrane"/>
    <property type="evidence" value="ECO:0000318"/>
    <property type="project" value="GO_Central"/>
</dbReference>
<dbReference type="GO" id="GO:0015095">
    <property type="term" value="F:magnesium ion transmembrane transporter activity"/>
    <property type="evidence" value="ECO:0007669"/>
    <property type="project" value="InterPro"/>
</dbReference>
<dbReference type="GO" id="GO:0015693">
    <property type="term" value="P:magnesium ion transport"/>
    <property type="evidence" value="ECO:0000318"/>
    <property type="project" value="GO_Central"/>
</dbReference>
<dbReference type="InterPro" id="IPR008521">
    <property type="entry name" value="Mg_trans_NIPA"/>
</dbReference>
<dbReference type="PANTHER" id="PTHR12570">
    <property type="match status" value="1"/>
</dbReference>
<dbReference type="PANTHER" id="PTHR12570:SF14">
    <property type="entry name" value="NIPA-LIKE PROTEIN 3"/>
    <property type="match status" value="1"/>
</dbReference>
<dbReference type="Pfam" id="PF05653">
    <property type="entry name" value="Mg_trans_NIPA"/>
    <property type="match status" value="1"/>
</dbReference>
<name>NPAL3_HUMAN</name>
<comment type="interaction">
    <interactant intactId="EBI-10252783">
        <id>Q6P499</id>
    </interactant>
    <interactant intactId="EBI-721179">
        <id>P27449</id>
        <label>ATP6V0C</label>
    </interactant>
    <organismsDiffer>false</organismsDiffer>
    <experiments>3</experiments>
</comment>
<comment type="interaction">
    <interactant intactId="EBI-10252783">
        <id>Q6P499</id>
    </interactant>
    <interactant intactId="EBI-7797864">
        <id>P11912</id>
        <label>CD79A</label>
    </interactant>
    <organismsDiffer>false</organismsDiffer>
    <experiments>3</experiments>
</comment>
<comment type="interaction">
    <interactant intactId="EBI-10252783">
        <id>Q6P499</id>
    </interactant>
    <interactant intactId="EBI-529425">
        <id>Q92838</id>
        <label>EDA</label>
    </interactant>
    <organismsDiffer>false</organismsDiffer>
    <experiments>8</experiments>
</comment>
<comment type="interaction">
    <interactant intactId="EBI-10252783">
        <id>Q6P499</id>
    </interactant>
    <interactant intactId="EBI-750433">
        <id>P36382</id>
        <label>GJA5</label>
    </interactant>
    <organismsDiffer>false</organismsDiffer>
    <experiments>3</experiments>
</comment>
<comment type="interaction">
    <interactant intactId="EBI-10252783">
        <id>Q6P499</id>
    </interactant>
    <interactant intactId="EBI-11721746">
        <id>Q8TED1</id>
        <label>GPX8</label>
    </interactant>
    <organismsDiffer>false</organismsDiffer>
    <experiments>3</experiments>
</comment>
<comment type="interaction">
    <interactant intactId="EBI-10252783">
        <id>Q6P499</id>
    </interactant>
    <interactant intactId="EBI-3867271">
        <id>Q9NQG1</id>
        <label>MANBAL</label>
    </interactant>
    <organismsDiffer>false</organismsDiffer>
    <experiments>3</experiments>
</comment>
<comment type="interaction">
    <interactant intactId="EBI-10252783">
        <id>Q6P499</id>
    </interactant>
    <interactant intactId="EBI-11956541">
        <id>Q9GZY8-5</id>
        <label>MFF</label>
    </interactant>
    <organismsDiffer>false</organismsDiffer>
    <experiments>3</experiments>
</comment>
<comment type="interaction">
    <interactant intactId="EBI-10252783">
        <id>Q6P499</id>
    </interactant>
    <interactant intactId="EBI-8638294">
        <id>Q9NUH8</id>
        <label>TMEM14B</label>
    </interactant>
    <organismsDiffer>false</organismsDiffer>
    <experiments>3</experiments>
</comment>
<comment type="interaction">
    <interactant intactId="EBI-10252783">
        <id>Q6P499</id>
    </interactant>
    <interactant intactId="EBI-1055364">
        <id>Q3ZAQ7</id>
        <label>VMA21</label>
    </interactant>
    <organismsDiffer>false</organismsDiffer>
    <experiments>3</experiments>
</comment>
<comment type="subcellular location">
    <subcellularLocation>
        <location evidence="4">Membrane</location>
        <topology evidence="4">Multi-pass membrane protein</topology>
    </subcellularLocation>
</comment>
<comment type="alternative products">
    <event type="alternative splicing"/>
    <isoform>
        <id>Q6P499-1</id>
        <name>1</name>
        <sequence type="displayed"/>
    </isoform>
    <isoform>
        <id>Q6P499-2</id>
        <name>2</name>
        <sequence type="described" ref="VSP_019445"/>
    </isoform>
    <isoform>
        <id>Q6P499-3</id>
        <name>3</name>
        <sequence type="described" ref="VSP_019446 VSP_019447"/>
    </isoform>
</comment>
<comment type="similarity">
    <text evidence="4">Belongs to the NIPA family.</text>
</comment>
<reference key="1">
    <citation type="journal article" date="2004" name="Nat. Genet.">
        <title>Complete sequencing and characterization of 21,243 full-length human cDNAs.</title>
        <authorList>
            <person name="Ota T."/>
            <person name="Suzuki Y."/>
            <person name="Nishikawa T."/>
            <person name="Otsuki T."/>
            <person name="Sugiyama T."/>
            <person name="Irie R."/>
            <person name="Wakamatsu A."/>
            <person name="Hayashi K."/>
            <person name="Sato H."/>
            <person name="Nagai K."/>
            <person name="Kimura K."/>
            <person name="Makita H."/>
            <person name="Sekine M."/>
            <person name="Obayashi M."/>
            <person name="Nishi T."/>
            <person name="Shibahara T."/>
            <person name="Tanaka T."/>
            <person name="Ishii S."/>
            <person name="Yamamoto J."/>
            <person name="Saito K."/>
            <person name="Kawai Y."/>
            <person name="Isono Y."/>
            <person name="Nakamura Y."/>
            <person name="Nagahari K."/>
            <person name="Murakami K."/>
            <person name="Yasuda T."/>
            <person name="Iwayanagi T."/>
            <person name="Wagatsuma M."/>
            <person name="Shiratori A."/>
            <person name="Sudo H."/>
            <person name="Hosoiri T."/>
            <person name="Kaku Y."/>
            <person name="Kodaira H."/>
            <person name="Kondo H."/>
            <person name="Sugawara M."/>
            <person name="Takahashi M."/>
            <person name="Kanda K."/>
            <person name="Yokoi T."/>
            <person name="Furuya T."/>
            <person name="Kikkawa E."/>
            <person name="Omura Y."/>
            <person name="Abe K."/>
            <person name="Kamihara K."/>
            <person name="Katsuta N."/>
            <person name="Sato K."/>
            <person name="Tanikawa M."/>
            <person name="Yamazaki M."/>
            <person name="Ninomiya K."/>
            <person name="Ishibashi T."/>
            <person name="Yamashita H."/>
            <person name="Murakawa K."/>
            <person name="Fujimori K."/>
            <person name="Tanai H."/>
            <person name="Kimata M."/>
            <person name="Watanabe M."/>
            <person name="Hiraoka S."/>
            <person name="Chiba Y."/>
            <person name="Ishida S."/>
            <person name="Ono Y."/>
            <person name="Takiguchi S."/>
            <person name="Watanabe S."/>
            <person name="Yosida M."/>
            <person name="Hotuta T."/>
            <person name="Kusano J."/>
            <person name="Kanehori K."/>
            <person name="Takahashi-Fujii A."/>
            <person name="Hara H."/>
            <person name="Tanase T.-O."/>
            <person name="Nomura Y."/>
            <person name="Togiya S."/>
            <person name="Komai F."/>
            <person name="Hara R."/>
            <person name="Takeuchi K."/>
            <person name="Arita M."/>
            <person name="Imose N."/>
            <person name="Musashino K."/>
            <person name="Yuuki H."/>
            <person name="Oshima A."/>
            <person name="Sasaki N."/>
            <person name="Aotsuka S."/>
            <person name="Yoshikawa Y."/>
            <person name="Matsunawa H."/>
            <person name="Ichihara T."/>
            <person name="Shiohata N."/>
            <person name="Sano S."/>
            <person name="Moriya S."/>
            <person name="Momiyama H."/>
            <person name="Satoh N."/>
            <person name="Takami S."/>
            <person name="Terashima Y."/>
            <person name="Suzuki O."/>
            <person name="Nakagawa S."/>
            <person name="Senoh A."/>
            <person name="Mizoguchi H."/>
            <person name="Goto Y."/>
            <person name="Shimizu F."/>
            <person name="Wakebe H."/>
            <person name="Hishigaki H."/>
            <person name="Watanabe T."/>
            <person name="Sugiyama A."/>
            <person name="Takemoto M."/>
            <person name="Kawakami B."/>
            <person name="Yamazaki M."/>
            <person name="Watanabe K."/>
            <person name="Kumagai A."/>
            <person name="Itakura S."/>
            <person name="Fukuzumi Y."/>
            <person name="Fujimori Y."/>
            <person name="Komiyama M."/>
            <person name="Tashiro H."/>
            <person name="Tanigami A."/>
            <person name="Fujiwara T."/>
            <person name="Ono T."/>
            <person name="Yamada K."/>
            <person name="Fujii Y."/>
            <person name="Ozaki K."/>
            <person name="Hirao M."/>
            <person name="Ohmori Y."/>
            <person name="Kawabata A."/>
            <person name="Hikiji T."/>
            <person name="Kobatake N."/>
            <person name="Inagaki H."/>
            <person name="Ikema Y."/>
            <person name="Okamoto S."/>
            <person name="Okitani R."/>
            <person name="Kawakami T."/>
            <person name="Noguchi S."/>
            <person name="Itoh T."/>
            <person name="Shigeta K."/>
            <person name="Senba T."/>
            <person name="Matsumura K."/>
            <person name="Nakajima Y."/>
            <person name="Mizuno T."/>
            <person name="Morinaga M."/>
            <person name="Sasaki M."/>
            <person name="Togashi T."/>
            <person name="Oyama M."/>
            <person name="Hata H."/>
            <person name="Watanabe M."/>
            <person name="Komatsu T."/>
            <person name="Mizushima-Sugano J."/>
            <person name="Satoh T."/>
            <person name="Shirai Y."/>
            <person name="Takahashi Y."/>
            <person name="Nakagawa K."/>
            <person name="Okumura K."/>
            <person name="Nagase T."/>
            <person name="Nomura N."/>
            <person name="Kikuchi H."/>
            <person name="Masuho Y."/>
            <person name="Yamashita R."/>
            <person name="Nakai K."/>
            <person name="Yada T."/>
            <person name="Nakamura Y."/>
            <person name="Ohara O."/>
            <person name="Isogai T."/>
            <person name="Sugano S."/>
        </authorList>
    </citation>
    <scope>NUCLEOTIDE SEQUENCE [LARGE SCALE MRNA] (ISOFORM 1)</scope>
    <source>
        <tissue>Brain</tissue>
    </source>
</reference>
<reference key="2">
    <citation type="journal article" date="2007" name="BMC Genomics">
        <title>The full-ORF clone resource of the German cDNA consortium.</title>
        <authorList>
            <person name="Bechtel S."/>
            <person name="Rosenfelder H."/>
            <person name="Duda A."/>
            <person name="Schmidt C.P."/>
            <person name="Ernst U."/>
            <person name="Wellenreuther R."/>
            <person name="Mehrle A."/>
            <person name="Schuster C."/>
            <person name="Bahr A."/>
            <person name="Bloecker H."/>
            <person name="Heubner D."/>
            <person name="Hoerlein A."/>
            <person name="Michel G."/>
            <person name="Wedler H."/>
            <person name="Koehrer K."/>
            <person name="Ottenwaelder B."/>
            <person name="Poustka A."/>
            <person name="Wiemann S."/>
            <person name="Schupp I."/>
        </authorList>
    </citation>
    <scope>NUCLEOTIDE SEQUENCE [LARGE SCALE MRNA] (ISOFORM 2)</scope>
    <source>
        <tissue>Endometrium</tissue>
    </source>
</reference>
<reference key="3">
    <citation type="journal article" date="2006" name="Nature">
        <title>The DNA sequence and biological annotation of human chromosome 1.</title>
        <authorList>
            <person name="Gregory S.G."/>
            <person name="Barlow K.F."/>
            <person name="McLay K.E."/>
            <person name="Kaul R."/>
            <person name="Swarbreck D."/>
            <person name="Dunham A."/>
            <person name="Scott C.E."/>
            <person name="Howe K.L."/>
            <person name="Woodfine K."/>
            <person name="Spencer C.C.A."/>
            <person name="Jones M.C."/>
            <person name="Gillson C."/>
            <person name="Searle S."/>
            <person name="Zhou Y."/>
            <person name="Kokocinski F."/>
            <person name="McDonald L."/>
            <person name="Evans R."/>
            <person name="Phillips K."/>
            <person name="Atkinson A."/>
            <person name="Cooper R."/>
            <person name="Jones C."/>
            <person name="Hall R.E."/>
            <person name="Andrews T.D."/>
            <person name="Lloyd C."/>
            <person name="Ainscough R."/>
            <person name="Almeida J.P."/>
            <person name="Ambrose K.D."/>
            <person name="Anderson F."/>
            <person name="Andrew R.W."/>
            <person name="Ashwell R.I.S."/>
            <person name="Aubin K."/>
            <person name="Babbage A.K."/>
            <person name="Bagguley C.L."/>
            <person name="Bailey J."/>
            <person name="Beasley H."/>
            <person name="Bethel G."/>
            <person name="Bird C.P."/>
            <person name="Bray-Allen S."/>
            <person name="Brown J.Y."/>
            <person name="Brown A.J."/>
            <person name="Buckley D."/>
            <person name="Burton J."/>
            <person name="Bye J."/>
            <person name="Carder C."/>
            <person name="Chapman J.C."/>
            <person name="Clark S.Y."/>
            <person name="Clarke G."/>
            <person name="Clee C."/>
            <person name="Cobley V."/>
            <person name="Collier R.E."/>
            <person name="Corby N."/>
            <person name="Coville G.J."/>
            <person name="Davies J."/>
            <person name="Deadman R."/>
            <person name="Dunn M."/>
            <person name="Earthrowl M."/>
            <person name="Ellington A.G."/>
            <person name="Errington H."/>
            <person name="Frankish A."/>
            <person name="Frankland J."/>
            <person name="French L."/>
            <person name="Garner P."/>
            <person name="Garnett J."/>
            <person name="Gay L."/>
            <person name="Ghori M.R.J."/>
            <person name="Gibson R."/>
            <person name="Gilby L.M."/>
            <person name="Gillett W."/>
            <person name="Glithero R.J."/>
            <person name="Grafham D.V."/>
            <person name="Griffiths C."/>
            <person name="Griffiths-Jones S."/>
            <person name="Grocock R."/>
            <person name="Hammond S."/>
            <person name="Harrison E.S.I."/>
            <person name="Hart E."/>
            <person name="Haugen E."/>
            <person name="Heath P.D."/>
            <person name="Holmes S."/>
            <person name="Holt K."/>
            <person name="Howden P.J."/>
            <person name="Hunt A.R."/>
            <person name="Hunt S.E."/>
            <person name="Hunter G."/>
            <person name="Isherwood J."/>
            <person name="James R."/>
            <person name="Johnson C."/>
            <person name="Johnson D."/>
            <person name="Joy A."/>
            <person name="Kay M."/>
            <person name="Kershaw J.K."/>
            <person name="Kibukawa M."/>
            <person name="Kimberley A.M."/>
            <person name="King A."/>
            <person name="Knights A.J."/>
            <person name="Lad H."/>
            <person name="Laird G."/>
            <person name="Lawlor S."/>
            <person name="Leongamornlert D.A."/>
            <person name="Lloyd D.M."/>
            <person name="Loveland J."/>
            <person name="Lovell J."/>
            <person name="Lush M.J."/>
            <person name="Lyne R."/>
            <person name="Martin S."/>
            <person name="Mashreghi-Mohammadi M."/>
            <person name="Matthews L."/>
            <person name="Matthews N.S.W."/>
            <person name="McLaren S."/>
            <person name="Milne S."/>
            <person name="Mistry S."/>
            <person name="Moore M.J.F."/>
            <person name="Nickerson T."/>
            <person name="O'Dell C.N."/>
            <person name="Oliver K."/>
            <person name="Palmeiri A."/>
            <person name="Palmer S.A."/>
            <person name="Parker A."/>
            <person name="Patel D."/>
            <person name="Pearce A.V."/>
            <person name="Peck A.I."/>
            <person name="Pelan S."/>
            <person name="Phelps K."/>
            <person name="Phillimore B.J."/>
            <person name="Plumb R."/>
            <person name="Rajan J."/>
            <person name="Raymond C."/>
            <person name="Rouse G."/>
            <person name="Saenphimmachak C."/>
            <person name="Sehra H.K."/>
            <person name="Sheridan E."/>
            <person name="Shownkeen R."/>
            <person name="Sims S."/>
            <person name="Skuce C.D."/>
            <person name="Smith M."/>
            <person name="Steward C."/>
            <person name="Subramanian S."/>
            <person name="Sycamore N."/>
            <person name="Tracey A."/>
            <person name="Tromans A."/>
            <person name="Van Helmond Z."/>
            <person name="Wall M."/>
            <person name="Wallis J.M."/>
            <person name="White S."/>
            <person name="Whitehead S.L."/>
            <person name="Wilkinson J.E."/>
            <person name="Willey D.L."/>
            <person name="Williams H."/>
            <person name="Wilming L."/>
            <person name="Wray P.W."/>
            <person name="Wu Z."/>
            <person name="Coulson A."/>
            <person name="Vaudin M."/>
            <person name="Sulston J.E."/>
            <person name="Durbin R.M."/>
            <person name="Hubbard T."/>
            <person name="Wooster R."/>
            <person name="Dunham I."/>
            <person name="Carter N.P."/>
            <person name="McVean G."/>
            <person name="Ross M.T."/>
            <person name="Harrow J."/>
            <person name="Olson M.V."/>
            <person name="Beck S."/>
            <person name="Rogers J."/>
            <person name="Bentley D.R."/>
        </authorList>
    </citation>
    <scope>NUCLEOTIDE SEQUENCE [LARGE SCALE GENOMIC DNA]</scope>
</reference>
<reference key="4">
    <citation type="submission" date="2005-07" db="EMBL/GenBank/DDBJ databases">
        <authorList>
            <person name="Mural R.J."/>
            <person name="Istrail S."/>
            <person name="Sutton G."/>
            <person name="Florea L."/>
            <person name="Halpern A.L."/>
            <person name="Mobarry C.M."/>
            <person name="Lippert R."/>
            <person name="Walenz B."/>
            <person name="Shatkay H."/>
            <person name="Dew I."/>
            <person name="Miller J.R."/>
            <person name="Flanigan M.J."/>
            <person name="Edwards N.J."/>
            <person name="Bolanos R."/>
            <person name="Fasulo D."/>
            <person name="Halldorsson B.V."/>
            <person name="Hannenhalli S."/>
            <person name="Turner R."/>
            <person name="Yooseph S."/>
            <person name="Lu F."/>
            <person name="Nusskern D.R."/>
            <person name="Shue B.C."/>
            <person name="Zheng X.H."/>
            <person name="Zhong F."/>
            <person name="Delcher A.L."/>
            <person name="Huson D.H."/>
            <person name="Kravitz S.A."/>
            <person name="Mouchard L."/>
            <person name="Reinert K."/>
            <person name="Remington K.A."/>
            <person name="Clark A.G."/>
            <person name="Waterman M.S."/>
            <person name="Eichler E.E."/>
            <person name="Adams M.D."/>
            <person name="Hunkapiller M.W."/>
            <person name="Myers E.W."/>
            <person name="Venter J.C."/>
        </authorList>
    </citation>
    <scope>NUCLEOTIDE SEQUENCE [LARGE SCALE GENOMIC DNA]</scope>
</reference>
<reference key="5">
    <citation type="journal article" date="2004" name="Genome Res.">
        <title>The status, quality, and expansion of the NIH full-length cDNA project: the Mammalian Gene Collection (MGC).</title>
        <authorList>
            <consortium name="The MGC Project Team"/>
        </authorList>
    </citation>
    <scope>NUCLEOTIDE SEQUENCE [LARGE SCALE MRNA] (ISOFORMS 1 AND 3)</scope>
    <source>
        <tissue>Lymph</tissue>
        <tissue>Placenta</tissue>
    </source>
</reference>
<reference key="6">
    <citation type="journal article" date="2009" name="Sci. Signal.">
        <title>Quantitative phosphoproteomic analysis of T cell receptor signaling reveals system-wide modulation of protein-protein interactions.</title>
        <authorList>
            <person name="Mayya V."/>
            <person name="Lundgren D.H."/>
            <person name="Hwang S.-I."/>
            <person name="Rezaul K."/>
            <person name="Wu L."/>
            <person name="Eng J.K."/>
            <person name="Rodionov V."/>
            <person name="Han D.K."/>
        </authorList>
    </citation>
    <scope>PHOSPHORYLATION [LARGE SCALE ANALYSIS] AT SER-372</scope>
    <scope>IDENTIFICATION BY MASS SPECTROMETRY [LARGE SCALE ANALYSIS]</scope>
    <source>
        <tissue>Leukemic T-cell</tissue>
    </source>
</reference>
<sequence length="406" mass="44742">MDGSHSAALKLQQLPPTSSSSAVSEASFSYKENLIGALLAIFGHLVVSIALNLQKYCHIRLAGSKDPRAYFKTKTWWLGLFLMLLGELGVFASYAFAPLSLIVPLSAVSVIASAIIGIIFIKEKWKPKDFLRRYVLSFVGCGLAVVGTYLLVTFAPNSHEKMTGENVTRHLVSWPFLLYMLVEIILFCLLLYFYKEKNANNIVVILLLVALLGSMTVVTVKAVAGMLVLSIQGNLQLDYPIFYVMFVCMVATAVYQAAFLSQASQMYDSSLIASVGYILSTTIAITAGAIFYLDFIGEDVLHICMFALGCLIAFLGVFLITRNRKKPIPFEPYISMDAMPGMQNMHDKGMTVQPELKASFSYGALENNDNISEIYAPATLPVMQEEHGSRSASGVPYRVLEHTKKE</sequence>
<protein>
    <recommendedName>
        <fullName>NIPA-like protein 3</fullName>
    </recommendedName>
</protein>
<proteinExistence type="evidence at protein level"/>
<feature type="chain" id="PRO_0000242150" description="NIPA-like protein 3">
    <location>
        <begin position="1"/>
        <end position="406"/>
    </location>
</feature>
<feature type="transmembrane region" description="Helical" evidence="1">
    <location>
        <begin position="33"/>
        <end position="53"/>
    </location>
</feature>
<feature type="transmembrane region" description="Helical" evidence="1">
    <location>
        <begin position="76"/>
        <end position="96"/>
    </location>
</feature>
<feature type="transmembrane region" description="Helical" evidence="1">
    <location>
        <begin position="101"/>
        <end position="121"/>
    </location>
</feature>
<feature type="transmembrane region" description="Helical" evidence="1">
    <location>
        <begin position="135"/>
        <end position="155"/>
    </location>
</feature>
<feature type="transmembrane region" description="Helical" evidence="1">
    <location>
        <begin position="171"/>
        <end position="191"/>
    </location>
</feature>
<feature type="transmembrane region" description="Helical" evidence="1">
    <location>
        <begin position="202"/>
        <end position="222"/>
    </location>
</feature>
<feature type="transmembrane region" description="Helical" evidence="1">
    <location>
        <begin position="240"/>
        <end position="260"/>
    </location>
</feature>
<feature type="transmembrane region" description="Helical" evidence="1">
    <location>
        <begin position="271"/>
        <end position="291"/>
    </location>
</feature>
<feature type="transmembrane region" description="Helical" evidence="1">
    <location>
        <begin position="300"/>
        <end position="320"/>
    </location>
</feature>
<feature type="modified residue" description="Phosphoserine" evidence="5">
    <location>
        <position position="372"/>
    </location>
</feature>
<feature type="glycosylation site" description="N-linked (GlcNAc...) asparagine" evidence="1">
    <location>
        <position position="166"/>
    </location>
</feature>
<feature type="splice variant" id="VSP_019445" description="In isoform 2." evidence="3">
    <location>
        <begin position="1"/>
        <end position="82"/>
    </location>
</feature>
<feature type="splice variant" id="VSP_019446" description="In isoform 3." evidence="2">
    <original>GSMTVVTVKAVAGM</original>
    <variation>VLLCHPGWSAVVQS</variation>
    <location>
        <begin position="213"/>
        <end position="226"/>
    </location>
</feature>
<feature type="splice variant" id="VSP_019447" description="In isoform 3." evidence="2">
    <location>
        <begin position="227"/>
        <end position="406"/>
    </location>
</feature>
<accession>Q6P499</accession>
<accession>A2A298</accession>
<accession>Q6MZT9</accession>
<accession>Q9BVE6</accession>
<organism>
    <name type="scientific">Homo sapiens</name>
    <name type="common">Human</name>
    <dbReference type="NCBI Taxonomy" id="9606"/>
    <lineage>
        <taxon>Eukaryota</taxon>
        <taxon>Metazoa</taxon>
        <taxon>Chordata</taxon>
        <taxon>Craniata</taxon>
        <taxon>Vertebrata</taxon>
        <taxon>Euteleostomi</taxon>
        <taxon>Mammalia</taxon>
        <taxon>Eutheria</taxon>
        <taxon>Euarchontoglires</taxon>
        <taxon>Primates</taxon>
        <taxon>Haplorrhini</taxon>
        <taxon>Catarrhini</taxon>
        <taxon>Hominidae</taxon>
        <taxon>Homo</taxon>
    </lineage>
</organism>
<keyword id="KW-0025">Alternative splicing</keyword>
<keyword id="KW-0325">Glycoprotein</keyword>
<keyword id="KW-0472">Membrane</keyword>
<keyword id="KW-0597">Phosphoprotein</keyword>
<keyword id="KW-1267">Proteomics identification</keyword>
<keyword id="KW-1185">Reference proteome</keyword>
<keyword id="KW-0812">Transmembrane</keyword>
<keyword id="KW-1133">Transmembrane helix</keyword>
<gene>
    <name type="primary">NIPAL3</name>
    <name type="synonym">NPAL3</name>
</gene>